<reference key="1">
    <citation type="journal article" date="2008" name="Environ. Microbiol.">
        <title>The genome of Erwinia tasmaniensis strain Et1/99, a non-pathogenic bacterium in the genus Erwinia.</title>
        <authorList>
            <person name="Kube M."/>
            <person name="Migdoll A.M."/>
            <person name="Mueller I."/>
            <person name="Kuhl H."/>
            <person name="Beck A."/>
            <person name="Reinhardt R."/>
            <person name="Geider K."/>
        </authorList>
    </citation>
    <scope>NUCLEOTIDE SEQUENCE [LARGE SCALE GENOMIC DNA]</scope>
    <source>
        <strain>DSM 17950 / CFBP 7177 / CIP 109463 / NCPPB 4357 / Et1/99</strain>
    </source>
</reference>
<protein>
    <recommendedName>
        <fullName evidence="1">Phosphopantetheine adenylyltransferase</fullName>
        <ecNumber evidence="1">2.7.7.3</ecNumber>
    </recommendedName>
    <alternativeName>
        <fullName evidence="1">Dephospho-CoA pyrophosphorylase</fullName>
    </alternativeName>
    <alternativeName>
        <fullName evidence="1">Pantetheine-phosphate adenylyltransferase</fullName>
        <shortName evidence="1">PPAT</shortName>
    </alternativeName>
</protein>
<sequence>MSTKAIYPGTFDPMTNGHLDIVTRAALMFDRIVLAVAASPSKKPMFSLEERVALAKEVVAHLPNVDVVGFSDLLANFAKAQQANVLVRGLRAVSDFEFEMQLAQMNRHLMDTLDSVFLMPSEQYSFISSSLMKEVARHGGDVETFLPAPVYKALKARL</sequence>
<gene>
    <name evidence="1" type="primary">coaD</name>
    <name type="ordered locus">ETA_00700</name>
</gene>
<organism>
    <name type="scientific">Erwinia tasmaniensis (strain DSM 17950 / CFBP 7177 / CIP 109463 / NCPPB 4357 / Et1/99)</name>
    <dbReference type="NCBI Taxonomy" id="465817"/>
    <lineage>
        <taxon>Bacteria</taxon>
        <taxon>Pseudomonadati</taxon>
        <taxon>Pseudomonadota</taxon>
        <taxon>Gammaproteobacteria</taxon>
        <taxon>Enterobacterales</taxon>
        <taxon>Erwiniaceae</taxon>
        <taxon>Erwinia</taxon>
    </lineage>
</organism>
<proteinExistence type="inferred from homology"/>
<comment type="function">
    <text evidence="1">Reversibly transfers an adenylyl group from ATP to 4'-phosphopantetheine, yielding dephospho-CoA (dPCoA) and pyrophosphate.</text>
</comment>
<comment type="catalytic activity">
    <reaction evidence="1">
        <text>(R)-4'-phosphopantetheine + ATP + H(+) = 3'-dephospho-CoA + diphosphate</text>
        <dbReference type="Rhea" id="RHEA:19801"/>
        <dbReference type="ChEBI" id="CHEBI:15378"/>
        <dbReference type="ChEBI" id="CHEBI:30616"/>
        <dbReference type="ChEBI" id="CHEBI:33019"/>
        <dbReference type="ChEBI" id="CHEBI:57328"/>
        <dbReference type="ChEBI" id="CHEBI:61723"/>
        <dbReference type="EC" id="2.7.7.3"/>
    </reaction>
</comment>
<comment type="cofactor">
    <cofactor evidence="1">
        <name>Mg(2+)</name>
        <dbReference type="ChEBI" id="CHEBI:18420"/>
    </cofactor>
</comment>
<comment type="pathway">
    <text evidence="1">Cofactor biosynthesis; coenzyme A biosynthesis; CoA from (R)-pantothenate: step 4/5.</text>
</comment>
<comment type="subunit">
    <text evidence="1">Homohexamer.</text>
</comment>
<comment type="subcellular location">
    <subcellularLocation>
        <location evidence="1">Cytoplasm</location>
    </subcellularLocation>
</comment>
<comment type="similarity">
    <text evidence="1">Belongs to the bacterial CoaD family.</text>
</comment>
<name>COAD_ERWT9</name>
<keyword id="KW-0067">ATP-binding</keyword>
<keyword id="KW-0173">Coenzyme A biosynthesis</keyword>
<keyword id="KW-0963">Cytoplasm</keyword>
<keyword id="KW-0460">Magnesium</keyword>
<keyword id="KW-0547">Nucleotide-binding</keyword>
<keyword id="KW-0548">Nucleotidyltransferase</keyword>
<keyword id="KW-1185">Reference proteome</keyword>
<keyword id="KW-0808">Transferase</keyword>
<dbReference type="EC" id="2.7.7.3" evidence="1"/>
<dbReference type="EMBL" id="CU468135">
    <property type="protein sequence ID" value="CAO95116.1"/>
    <property type="molecule type" value="Genomic_DNA"/>
</dbReference>
<dbReference type="RefSeq" id="WP_012439842.1">
    <property type="nucleotide sequence ID" value="NC_010694.1"/>
</dbReference>
<dbReference type="SMR" id="B2VF71"/>
<dbReference type="STRING" id="465817.ETA_00700"/>
<dbReference type="KEGG" id="eta:ETA_00700"/>
<dbReference type="eggNOG" id="COG0669">
    <property type="taxonomic scope" value="Bacteria"/>
</dbReference>
<dbReference type="HOGENOM" id="CLU_100149_0_1_6"/>
<dbReference type="OrthoDB" id="9806661at2"/>
<dbReference type="UniPathway" id="UPA00241">
    <property type="reaction ID" value="UER00355"/>
</dbReference>
<dbReference type="Proteomes" id="UP000001726">
    <property type="component" value="Chromosome"/>
</dbReference>
<dbReference type="GO" id="GO:0005737">
    <property type="term" value="C:cytoplasm"/>
    <property type="evidence" value="ECO:0007669"/>
    <property type="project" value="UniProtKB-SubCell"/>
</dbReference>
<dbReference type="GO" id="GO:0005524">
    <property type="term" value="F:ATP binding"/>
    <property type="evidence" value="ECO:0007669"/>
    <property type="project" value="UniProtKB-KW"/>
</dbReference>
<dbReference type="GO" id="GO:0004595">
    <property type="term" value="F:pantetheine-phosphate adenylyltransferase activity"/>
    <property type="evidence" value="ECO:0007669"/>
    <property type="project" value="UniProtKB-UniRule"/>
</dbReference>
<dbReference type="GO" id="GO:0015937">
    <property type="term" value="P:coenzyme A biosynthetic process"/>
    <property type="evidence" value="ECO:0007669"/>
    <property type="project" value="UniProtKB-UniRule"/>
</dbReference>
<dbReference type="CDD" id="cd02163">
    <property type="entry name" value="PPAT"/>
    <property type="match status" value="1"/>
</dbReference>
<dbReference type="FunFam" id="3.40.50.620:FF:000012">
    <property type="entry name" value="Phosphopantetheine adenylyltransferase"/>
    <property type="match status" value="1"/>
</dbReference>
<dbReference type="Gene3D" id="3.40.50.620">
    <property type="entry name" value="HUPs"/>
    <property type="match status" value="1"/>
</dbReference>
<dbReference type="HAMAP" id="MF_00151">
    <property type="entry name" value="PPAT_bact"/>
    <property type="match status" value="1"/>
</dbReference>
<dbReference type="InterPro" id="IPR004821">
    <property type="entry name" value="Cyt_trans-like"/>
</dbReference>
<dbReference type="InterPro" id="IPR001980">
    <property type="entry name" value="PPAT"/>
</dbReference>
<dbReference type="InterPro" id="IPR014729">
    <property type="entry name" value="Rossmann-like_a/b/a_fold"/>
</dbReference>
<dbReference type="NCBIfam" id="TIGR01510">
    <property type="entry name" value="coaD_prev_kdtB"/>
    <property type="match status" value="1"/>
</dbReference>
<dbReference type="NCBIfam" id="TIGR00125">
    <property type="entry name" value="cyt_tran_rel"/>
    <property type="match status" value="1"/>
</dbReference>
<dbReference type="PANTHER" id="PTHR21342">
    <property type="entry name" value="PHOSPHOPANTETHEINE ADENYLYLTRANSFERASE"/>
    <property type="match status" value="1"/>
</dbReference>
<dbReference type="PANTHER" id="PTHR21342:SF1">
    <property type="entry name" value="PHOSPHOPANTETHEINE ADENYLYLTRANSFERASE"/>
    <property type="match status" value="1"/>
</dbReference>
<dbReference type="Pfam" id="PF01467">
    <property type="entry name" value="CTP_transf_like"/>
    <property type="match status" value="1"/>
</dbReference>
<dbReference type="PRINTS" id="PR01020">
    <property type="entry name" value="LPSBIOSNTHSS"/>
</dbReference>
<dbReference type="SUPFAM" id="SSF52374">
    <property type="entry name" value="Nucleotidylyl transferase"/>
    <property type="match status" value="1"/>
</dbReference>
<feature type="chain" id="PRO_1000096792" description="Phosphopantetheine adenylyltransferase">
    <location>
        <begin position="1"/>
        <end position="158"/>
    </location>
</feature>
<feature type="binding site" evidence="1">
    <location>
        <begin position="10"/>
        <end position="11"/>
    </location>
    <ligand>
        <name>ATP</name>
        <dbReference type="ChEBI" id="CHEBI:30616"/>
    </ligand>
</feature>
<feature type="binding site" evidence="1">
    <location>
        <position position="10"/>
    </location>
    <ligand>
        <name>substrate</name>
    </ligand>
</feature>
<feature type="binding site" evidence="1">
    <location>
        <position position="18"/>
    </location>
    <ligand>
        <name>ATP</name>
        <dbReference type="ChEBI" id="CHEBI:30616"/>
    </ligand>
</feature>
<feature type="binding site" evidence="1">
    <location>
        <position position="42"/>
    </location>
    <ligand>
        <name>substrate</name>
    </ligand>
</feature>
<feature type="binding site" evidence="1">
    <location>
        <position position="74"/>
    </location>
    <ligand>
        <name>substrate</name>
    </ligand>
</feature>
<feature type="binding site" evidence="1">
    <location>
        <position position="88"/>
    </location>
    <ligand>
        <name>substrate</name>
    </ligand>
</feature>
<feature type="binding site" evidence="1">
    <location>
        <begin position="89"/>
        <end position="91"/>
    </location>
    <ligand>
        <name>ATP</name>
        <dbReference type="ChEBI" id="CHEBI:30616"/>
    </ligand>
</feature>
<feature type="binding site" evidence="1">
    <location>
        <position position="99"/>
    </location>
    <ligand>
        <name>ATP</name>
        <dbReference type="ChEBI" id="CHEBI:30616"/>
    </ligand>
</feature>
<feature type="binding site" evidence="1">
    <location>
        <begin position="124"/>
        <end position="130"/>
    </location>
    <ligand>
        <name>ATP</name>
        <dbReference type="ChEBI" id="CHEBI:30616"/>
    </ligand>
</feature>
<feature type="site" description="Transition state stabilizer" evidence="1">
    <location>
        <position position="18"/>
    </location>
</feature>
<evidence type="ECO:0000255" key="1">
    <source>
        <dbReference type="HAMAP-Rule" id="MF_00151"/>
    </source>
</evidence>
<accession>B2VF71</accession>